<feature type="chain" id="PRO_0000407600" description="Methionine aminopeptidase 2-1">
    <location>
        <begin position="1"/>
        <end position="445"/>
    </location>
</feature>
<feature type="region of interest" description="Disordered" evidence="2">
    <location>
        <begin position="1"/>
        <end position="86"/>
    </location>
</feature>
<feature type="compositionally biased region" description="Acidic residues" evidence="2">
    <location>
        <begin position="34"/>
        <end position="46"/>
    </location>
</feature>
<feature type="compositionally biased region" description="Basic residues" evidence="2">
    <location>
        <begin position="59"/>
        <end position="74"/>
    </location>
</feature>
<feature type="binding site" evidence="1">
    <location>
        <position position="198"/>
    </location>
    <ligand>
        <name>substrate</name>
    </ligand>
</feature>
<feature type="binding site" evidence="1">
    <location>
        <position position="218"/>
    </location>
    <ligand>
        <name>a divalent metal cation</name>
        <dbReference type="ChEBI" id="CHEBI:60240"/>
        <label>1</label>
    </ligand>
</feature>
<feature type="binding site" evidence="1">
    <location>
        <position position="229"/>
    </location>
    <ligand>
        <name>a divalent metal cation</name>
        <dbReference type="ChEBI" id="CHEBI:60240"/>
        <label>1</label>
    </ligand>
</feature>
<feature type="binding site" evidence="1">
    <location>
        <position position="229"/>
    </location>
    <ligand>
        <name>a divalent metal cation</name>
        <dbReference type="ChEBI" id="CHEBI:60240"/>
        <label>2</label>
        <note>catalytic</note>
    </ligand>
</feature>
<feature type="binding site" evidence="1">
    <location>
        <position position="298"/>
    </location>
    <ligand>
        <name>a divalent metal cation</name>
        <dbReference type="ChEBI" id="CHEBI:60240"/>
        <label>2</label>
        <note>catalytic</note>
    </ligand>
</feature>
<feature type="binding site" evidence="1">
    <location>
        <position position="306"/>
    </location>
    <ligand>
        <name>substrate</name>
    </ligand>
</feature>
<feature type="binding site" evidence="1">
    <location>
        <position position="331"/>
    </location>
    <ligand>
        <name>a divalent metal cation</name>
        <dbReference type="ChEBI" id="CHEBI:60240"/>
        <label>2</label>
        <note>catalytic</note>
    </ligand>
</feature>
<feature type="binding site" evidence="1">
    <location>
        <position position="426"/>
    </location>
    <ligand>
        <name>a divalent metal cation</name>
        <dbReference type="ChEBI" id="CHEBI:60240"/>
        <label>1</label>
    </ligand>
</feature>
<feature type="binding site" evidence="1">
    <location>
        <position position="426"/>
    </location>
    <ligand>
        <name>a divalent metal cation</name>
        <dbReference type="ChEBI" id="CHEBI:60240"/>
        <label>2</label>
        <note>catalytic</note>
    </ligand>
</feature>
<evidence type="ECO:0000255" key="1">
    <source>
        <dbReference type="HAMAP-Rule" id="MF_03175"/>
    </source>
</evidence>
<evidence type="ECO:0000256" key="2">
    <source>
        <dbReference type="SAM" id="MobiDB-lite"/>
    </source>
</evidence>
<gene>
    <name type="ORF">AFLA_113020</name>
</gene>
<reference key="1">
    <citation type="journal article" date="2015" name="Genome Announc.">
        <title>Genome sequence of Aspergillus flavus NRRL 3357, a strain that causes aflatoxin contamination of food and feed.</title>
        <authorList>
            <person name="Nierman W.C."/>
            <person name="Yu J."/>
            <person name="Fedorova-Abrams N.D."/>
            <person name="Losada L."/>
            <person name="Cleveland T.E."/>
            <person name="Bhatnagar D."/>
            <person name="Bennett J.W."/>
            <person name="Dean R."/>
            <person name="Payne G.A."/>
        </authorList>
    </citation>
    <scope>NUCLEOTIDE SEQUENCE [LARGE SCALE GENOMIC DNA]</scope>
    <source>
        <strain>ATCC 200026 / FGSC A1120 / IAM 13836 / NRRL 3357 / JCM 12722 / SRRC 167</strain>
    </source>
</reference>
<name>MAP21_ASPFN</name>
<dbReference type="EC" id="3.4.11.18" evidence="1"/>
<dbReference type="EMBL" id="EQ963475">
    <property type="protein sequence ID" value="EED53925.1"/>
    <property type="molecule type" value="Genomic_DNA"/>
</dbReference>
<dbReference type="RefSeq" id="XP_002377171.1">
    <property type="nucleotide sequence ID" value="XM_002377130.1"/>
</dbReference>
<dbReference type="SMR" id="B8NA06"/>
<dbReference type="STRING" id="332952.B8NA06"/>
<dbReference type="EnsemblFungi" id="EED53925">
    <property type="protein sequence ID" value="EED53925"/>
    <property type="gene ID" value="AFLA_113020"/>
</dbReference>
<dbReference type="VEuPathDB" id="FungiDB:AFLA_007246"/>
<dbReference type="eggNOG" id="KOG2775">
    <property type="taxonomic scope" value="Eukaryota"/>
</dbReference>
<dbReference type="HOGENOM" id="CLU_015857_7_1_1"/>
<dbReference type="OMA" id="PFAKRWL"/>
<dbReference type="GO" id="GO:0005737">
    <property type="term" value="C:cytoplasm"/>
    <property type="evidence" value="ECO:0007669"/>
    <property type="project" value="UniProtKB-SubCell"/>
</dbReference>
<dbReference type="GO" id="GO:0004239">
    <property type="term" value="F:initiator methionyl aminopeptidase activity"/>
    <property type="evidence" value="ECO:0007669"/>
    <property type="project" value="UniProtKB-UniRule"/>
</dbReference>
<dbReference type="GO" id="GO:0046872">
    <property type="term" value="F:metal ion binding"/>
    <property type="evidence" value="ECO:0007669"/>
    <property type="project" value="UniProtKB-UniRule"/>
</dbReference>
<dbReference type="GO" id="GO:0070006">
    <property type="term" value="F:metalloaminopeptidase activity"/>
    <property type="evidence" value="ECO:0007669"/>
    <property type="project" value="UniProtKB-UniRule"/>
</dbReference>
<dbReference type="GO" id="GO:0006508">
    <property type="term" value="P:proteolysis"/>
    <property type="evidence" value="ECO:0007669"/>
    <property type="project" value="UniProtKB-KW"/>
</dbReference>
<dbReference type="CDD" id="cd01088">
    <property type="entry name" value="MetAP2"/>
    <property type="match status" value="1"/>
</dbReference>
<dbReference type="FunFam" id="1.10.10.10:FF:000370">
    <property type="entry name" value="Methionine aminopeptidase 2"/>
    <property type="match status" value="1"/>
</dbReference>
<dbReference type="Gene3D" id="3.90.230.10">
    <property type="entry name" value="Creatinase/methionine aminopeptidase superfamily"/>
    <property type="match status" value="1"/>
</dbReference>
<dbReference type="Gene3D" id="1.10.10.10">
    <property type="entry name" value="Winged helix-like DNA-binding domain superfamily/Winged helix DNA-binding domain"/>
    <property type="match status" value="1"/>
</dbReference>
<dbReference type="HAMAP" id="MF_03175">
    <property type="entry name" value="MetAP_2_euk"/>
    <property type="match status" value="1"/>
</dbReference>
<dbReference type="InterPro" id="IPR036005">
    <property type="entry name" value="Creatinase/aminopeptidase-like"/>
</dbReference>
<dbReference type="InterPro" id="IPR050247">
    <property type="entry name" value="Met_Aminopeptidase_Type2"/>
</dbReference>
<dbReference type="InterPro" id="IPR000994">
    <property type="entry name" value="Pept_M24"/>
</dbReference>
<dbReference type="InterPro" id="IPR001714">
    <property type="entry name" value="Pept_M24_MAP"/>
</dbReference>
<dbReference type="InterPro" id="IPR002468">
    <property type="entry name" value="Pept_M24A_MAP2"/>
</dbReference>
<dbReference type="InterPro" id="IPR018349">
    <property type="entry name" value="Pept_M24A_MAP2_BS"/>
</dbReference>
<dbReference type="InterPro" id="IPR036388">
    <property type="entry name" value="WH-like_DNA-bd_sf"/>
</dbReference>
<dbReference type="InterPro" id="IPR036390">
    <property type="entry name" value="WH_DNA-bd_sf"/>
</dbReference>
<dbReference type="NCBIfam" id="TIGR00501">
    <property type="entry name" value="met_pdase_II"/>
    <property type="match status" value="1"/>
</dbReference>
<dbReference type="PANTHER" id="PTHR45777">
    <property type="entry name" value="METHIONINE AMINOPEPTIDASE 2"/>
    <property type="match status" value="1"/>
</dbReference>
<dbReference type="PANTHER" id="PTHR45777:SF2">
    <property type="entry name" value="METHIONINE AMINOPEPTIDASE 2"/>
    <property type="match status" value="1"/>
</dbReference>
<dbReference type="Pfam" id="PF00557">
    <property type="entry name" value="Peptidase_M24"/>
    <property type="match status" value="1"/>
</dbReference>
<dbReference type="PRINTS" id="PR00599">
    <property type="entry name" value="MAPEPTIDASE"/>
</dbReference>
<dbReference type="SUPFAM" id="SSF55920">
    <property type="entry name" value="Creatinase/aminopeptidase"/>
    <property type="match status" value="1"/>
</dbReference>
<dbReference type="SUPFAM" id="SSF46785">
    <property type="entry name" value="Winged helix' DNA-binding domain"/>
    <property type="match status" value="1"/>
</dbReference>
<dbReference type="PROSITE" id="PS01202">
    <property type="entry name" value="MAP_2"/>
    <property type="match status" value="1"/>
</dbReference>
<accession>B8NA06</accession>
<proteinExistence type="inferred from homology"/>
<protein>
    <recommendedName>
        <fullName evidence="1">Methionine aminopeptidase 2-1</fullName>
        <shortName evidence="1">MAP 2-1</shortName>
        <shortName evidence="1">MetAP 2-1</shortName>
        <ecNumber evidence="1">3.4.11.18</ecNumber>
    </recommendedName>
    <alternativeName>
        <fullName evidence="1">Peptidase M</fullName>
    </alternativeName>
</protein>
<comment type="function">
    <text evidence="1">Cotranslationally removes the N-terminal methionine from nascent proteins. The N-terminal methionine is often cleaved when the second residue in the primary sequence is small and uncharged (Met-Ala-, Cys, Gly, Pro, Ser, Thr, or Val).</text>
</comment>
<comment type="catalytic activity">
    <reaction evidence="1">
        <text>Release of N-terminal amino acids, preferentially methionine, from peptides and arylamides.</text>
        <dbReference type="EC" id="3.4.11.18"/>
    </reaction>
</comment>
<comment type="cofactor">
    <cofactor evidence="1">
        <name>Co(2+)</name>
        <dbReference type="ChEBI" id="CHEBI:48828"/>
    </cofactor>
    <cofactor evidence="1">
        <name>Zn(2+)</name>
        <dbReference type="ChEBI" id="CHEBI:29105"/>
    </cofactor>
    <cofactor evidence="1">
        <name>Mn(2+)</name>
        <dbReference type="ChEBI" id="CHEBI:29035"/>
    </cofactor>
    <cofactor evidence="1">
        <name>Fe(2+)</name>
        <dbReference type="ChEBI" id="CHEBI:29033"/>
    </cofactor>
    <text evidence="1">Binds 2 divalent metal cations per subunit. Has a high-affinity and a low affinity metal-binding site. The true nature of the physiological cofactor is under debate. The enzyme is active with cobalt, zinc, manganese or divalent iron ions. Most likely, methionine aminopeptidases function as mononuclear Fe(2+)-metalloproteases under physiological conditions, and the catalytically relevant metal-binding site has been assigned to the histidine-containing high-affinity site.</text>
</comment>
<comment type="subcellular location">
    <subcellularLocation>
        <location evidence="1">Cytoplasm</location>
    </subcellularLocation>
</comment>
<comment type="similarity">
    <text evidence="1">Belongs to the peptidase M24A family. Methionine aminopeptidase eukaryotic type 2 subfamily.</text>
</comment>
<organism>
    <name type="scientific">Aspergillus flavus (strain ATCC 200026 / FGSC A1120 / IAM 13836 / NRRL 3357 / JCM 12722 / SRRC 167)</name>
    <dbReference type="NCBI Taxonomy" id="332952"/>
    <lineage>
        <taxon>Eukaryota</taxon>
        <taxon>Fungi</taxon>
        <taxon>Dikarya</taxon>
        <taxon>Ascomycota</taxon>
        <taxon>Pezizomycotina</taxon>
        <taxon>Eurotiomycetes</taxon>
        <taxon>Eurotiomycetidae</taxon>
        <taxon>Eurotiales</taxon>
        <taxon>Aspergillaceae</taxon>
        <taxon>Aspergillus</taxon>
        <taxon>Aspergillus subgen. Circumdati</taxon>
    </lineage>
</organism>
<sequence length="445" mass="48527">MAAQASEDLQKLDLNGQGGAAKADAPTAGQAEAGEAEDDSDDDADEGNAAPEGGANGAAKKKKKRKSKKKKKGGAKVQSEPPRVPLSQLFAGKQYPEGEIVEYKDDNLYRTTNEEKRYLDRMNNDFLQEYRQGAEVHRQVRQYAQKTIKPGQTLTEIAEGIEESVRALTGHQGLEEGDNLKGGMGFPCGLSINHCAAHYTPNAGNKMVLQQGDVMKVDFGAHINGRIVDSAFTVAFDPVYDPLLEAVKDATNTGIREAGIDVRMSDIGAAIQEAMESYEVELNGTMHPVKCIRNLNGHNIDQHVIHGGKSVPIVKGGDQTKMEEGEVFAIETFGSTGKGYVREDMETSHYALVPNASPVPLRLSSAKNLLNVINKNFGTLPFCRRYLDRLGQDKYLLGLNNLVSSGIVQDYPPLCDIKGSYTAQYEHTIVLRPNVKEVISRGDDY</sequence>
<keyword id="KW-0031">Aminopeptidase</keyword>
<keyword id="KW-0963">Cytoplasm</keyword>
<keyword id="KW-0378">Hydrolase</keyword>
<keyword id="KW-0479">Metal-binding</keyword>
<keyword id="KW-0645">Protease</keyword>